<comment type="function">
    <text evidence="1 5">Transcriptional regulator. Involved in the initiation of neuronal differentiation. Activates transcription by binding to the E box (5'-CANNTG-3') (By similarity). May be involved in the functional network that regulates the development of the GnRH axis (PubMed:32620954).</text>
</comment>
<comment type="subunit">
    <text evidence="2">Efficient DNA binding requires dimerization with another bHLH protein.</text>
</comment>
<comment type="subcellular location">
    <subcellularLocation>
        <location evidence="3">Nucleus</location>
    </subcellularLocation>
</comment>
<comment type="alternative products">
    <event type="alternative splicing"/>
    <isoform>
        <id>A0A0R4IBL7-1</id>
        <name>1</name>
        <sequence type="displayed"/>
    </isoform>
    <isoform>
        <id>A0A0R4IBL7-2</id>
        <name>2</name>
        <sequence type="described" ref="VSP_061704"/>
    </isoform>
    <isoform>
        <id>A0A0R4IBL7-3</id>
        <name>3</name>
        <sequence type="described" ref="VSP_061703 VSP_061704"/>
    </isoform>
</comment>
<comment type="disruption phenotype">
    <text evidence="5">Morpholino lockdown of the gene in 2 days post-fertilization (dpf) larvae show a dose-dependent significant reduction in the length of the terminal nerve axons, which provide the scaffold for migrating GnRH neurons towards the hypothalamus. In addition, there is a significant reduction in the size of the olfactory bulb.</text>
</comment>
<organism>
    <name type="scientific">Danio rerio</name>
    <name type="common">Zebrafish</name>
    <name type="synonym">Brachydanio rerio</name>
    <dbReference type="NCBI Taxonomy" id="7955"/>
    <lineage>
        <taxon>Eukaryota</taxon>
        <taxon>Metazoa</taxon>
        <taxon>Chordata</taxon>
        <taxon>Craniata</taxon>
        <taxon>Vertebrata</taxon>
        <taxon>Euteleostomi</taxon>
        <taxon>Actinopterygii</taxon>
        <taxon>Neopterygii</taxon>
        <taxon>Teleostei</taxon>
        <taxon>Ostariophysi</taxon>
        <taxon>Cypriniformes</taxon>
        <taxon>Danionidae</taxon>
        <taxon>Danioninae</taxon>
        <taxon>Danio</taxon>
    </lineage>
</organism>
<accession>A0A0R4IBL7</accession>
<accession>A0A8M1PFS7</accession>
<accession>E9QDA6</accession>
<accession>Q6NSM7</accession>
<evidence type="ECO:0000250" key="1">
    <source>
        <dbReference type="UniProtKB" id="Q61286"/>
    </source>
</evidence>
<evidence type="ECO:0000250" key="2">
    <source>
        <dbReference type="UniProtKB" id="Q99081"/>
    </source>
</evidence>
<evidence type="ECO:0000255" key="3">
    <source>
        <dbReference type="PROSITE-ProRule" id="PRU00981"/>
    </source>
</evidence>
<evidence type="ECO:0000256" key="4">
    <source>
        <dbReference type="SAM" id="MobiDB-lite"/>
    </source>
</evidence>
<evidence type="ECO:0000269" key="5">
    <source>
    </source>
</evidence>
<evidence type="ECO:0000303" key="6">
    <source>
    </source>
</evidence>
<evidence type="ECO:0000303" key="7">
    <source ref="2"/>
</evidence>
<protein>
    <recommendedName>
        <fullName>Transcription factor 12</fullName>
        <shortName>TCF-12</shortName>
    </recommendedName>
</protein>
<keyword id="KW-0025">Alternative splicing</keyword>
<keyword id="KW-0217">Developmental protein</keyword>
<keyword id="KW-0221">Differentiation</keyword>
<keyword id="KW-0238">DNA-binding</keyword>
<keyword id="KW-1017">Isopeptide bond</keyword>
<keyword id="KW-0524">Neurogenesis</keyword>
<keyword id="KW-0539">Nucleus</keyword>
<keyword id="KW-1185">Reference proteome</keyword>
<keyword id="KW-0804">Transcription</keyword>
<keyword id="KW-0805">Transcription regulation</keyword>
<dbReference type="EMBL" id="AL928670">
    <property type="status" value="NOT_ANNOTATED_CDS"/>
    <property type="molecule type" value="Genomic_DNA"/>
</dbReference>
<dbReference type="EMBL" id="BX323544">
    <property type="status" value="NOT_ANNOTATED_CDS"/>
    <property type="molecule type" value="Genomic_DNA"/>
</dbReference>
<dbReference type="EMBL" id="BC070024">
    <property type="protein sequence ID" value="AAH70024.1"/>
    <property type="molecule type" value="mRNA"/>
</dbReference>
<dbReference type="RefSeq" id="NP_999981.1">
    <molecule id="A0A0R4IBL7-3"/>
    <property type="nucleotide sequence ID" value="NM_214816.1"/>
</dbReference>
<dbReference type="RefSeq" id="XP_009301710.1">
    <molecule id="A0A0R4IBL7-1"/>
    <property type="nucleotide sequence ID" value="XM_009303435.4"/>
</dbReference>
<dbReference type="RefSeq" id="XP_009301712.1">
    <molecule id="A0A0R4IBL7-2"/>
    <property type="nucleotide sequence ID" value="XM_009303437.3"/>
</dbReference>
<dbReference type="SMR" id="A0A0R4IBL7"/>
<dbReference type="FunCoup" id="A0A0R4IBL7">
    <property type="interactions" value="2356"/>
</dbReference>
<dbReference type="PaxDb" id="7955-ENSDARP00000123095"/>
<dbReference type="Ensembl" id="ENSDART00000161387">
    <molecule id="A0A0R4IBL7-1"/>
    <property type="protein sequence ID" value="ENSDARP00000132258"/>
    <property type="gene ID" value="ENSDARG00000004714"/>
</dbReference>
<dbReference type="GeneID" id="407985"/>
<dbReference type="KEGG" id="dre:407985"/>
<dbReference type="AGR" id="ZFIN:ZDB-GENE-040516-11"/>
<dbReference type="CTD" id="6938"/>
<dbReference type="ZFIN" id="ZDB-GENE-040516-11">
    <property type="gene designation" value="tcf12"/>
</dbReference>
<dbReference type="eggNOG" id="KOG3910">
    <property type="taxonomic scope" value="Eukaryota"/>
</dbReference>
<dbReference type="HOGENOM" id="CLU_021099_2_0_1"/>
<dbReference type="InParanoid" id="A0A0R4IBL7"/>
<dbReference type="OMA" id="SSRGRTX"/>
<dbReference type="OrthoDB" id="10034090at2759"/>
<dbReference type="TreeFam" id="TF321672"/>
<dbReference type="Reactome" id="R-DRE-525793">
    <property type="pathway name" value="Myogenesis"/>
</dbReference>
<dbReference type="PRO" id="PR:A0A0R4IBL7"/>
<dbReference type="Proteomes" id="UP000000437">
    <property type="component" value="Chromosome 7"/>
</dbReference>
<dbReference type="Bgee" id="ENSDARG00000004714">
    <property type="expression patterns" value="Expressed in retina and 52 other cell types or tissues"/>
</dbReference>
<dbReference type="ExpressionAtlas" id="A0A0R4IBL7">
    <property type="expression patterns" value="baseline"/>
</dbReference>
<dbReference type="GO" id="GO:0000785">
    <property type="term" value="C:chromatin"/>
    <property type="evidence" value="ECO:0000318"/>
    <property type="project" value="GO_Central"/>
</dbReference>
<dbReference type="GO" id="GO:0005634">
    <property type="term" value="C:nucleus"/>
    <property type="evidence" value="ECO:0007669"/>
    <property type="project" value="UniProtKB-SubCell"/>
</dbReference>
<dbReference type="GO" id="GO:0005667">
    <property type="term" value="C:transcription regulator complex"/>
    <property type="evidence" value="ECO:0000318"/>
    <property type="project" value="GO_Central"/>
</dbReference>
<dbReference type="GO" id="GO:0000981">
    <property type="term" value="F:DNA-binding transcription factor activity, RNA polymerase II-specific"/>
    <property type="evidence" value="ECO:0000318"/>
    <property type="project" value="GO_Central"/>
</dbReference>
<dbReference type="GO" id="GO:0046983">
    <property type="term" value="F:protein dimerization activity"/>
    <property type="evidence" value="ECO:0007669"/>
    <property type="project" value="InterPro"/>
</dbReference>
<dbReference type="GO" id="GO:0000978">
    <property type="term" value="F:RNA polymerase II cis-regulatory region sequence-specific DNA binding"/>
    <property type="evidence" value="ECO:0000318"/>
    <property type="project" value="GO_Central"/>
</dbReference>
<dbReference type="GO" id="GO:0031175">
    <property type="term" value="P:neuron projection development"/>
    <property type="evidence" value="ECO:0000315"/>
    <property type="project" value="ZFIN"/>
</dbReference>
<dbReference type="GO" id="GO:0006357">
    <property type="term" value="P:regulation of transcription by RNA polymerase II"/>
    <property type="evidence" value="ECO:0000318"/>
    <property type="project" value="GO_Central"/>
</dbReference>
<dbReference type="CDD" id="cd18945">
    <property type="entry name" value="bHLH_E-protein_TCF4_E2-2"/>
    <property type="match status" value="1"/>
</dbReference>
<dbReference type="FunFam" id="4.10.280.10:FF:000001">
    <property type="entry name" value="Putative transcription factor 12"/>
    <property type="match status" value="1"/>
</dbReference>
<dbReference type="Gene3D" id="4.10.280.10">
    <property type="entry name" value="Helix-loop-helix DNA-binding domain"/>
    <property type="match status" value="1"/>
</dbReference>
<dbReference type="InterPro" id="IPR011598">
    <property type="entry name" value="bHLH_dom"/>
</dbReference>
<dbReference type="InterPro" id="IPR036638">
    <property type="entry name" value="HLH_DNA-bd_sf"/>
</dbReference>
<dbReference type="InterPro" id="IPR051098">
    <property type="entry name" value="NeuroDiff_E-box_TFs"/>
</dbReference>
<dbReference type="PANTHER" id="PTHR11793">
    <property type="entry name" value="BASIC HELIX-LOOP-HELIX TRANSCRIPTION FACTOR"/>
    <property type="match status" value="1"/>
</dbReference>
<dbReference type="PANTHER" id="PTHR11793:SF11">
    <property type="entry name" value="TRANSCRIPTION FACTOR 12"/>
    <property type="match status" value="1"/>
</dbReference>
<dbReference type="Pfam" id="PF00010">
    <property type="entry name" value="HLH"/>
    <property type="match status" value="1"/>
</dbReference>
<dbReference type="SMART" id="SM00353">
    <property type="entry name" value="HLH"/>
    <property type="match status" value="1"/>
</dbReference>
<dbReference type="SUPFAM" id="SSF47459">
    <property type="entry name" value="HLH, helix-loop-helix DNA-binding domain"/>
    <property type="match status" value="1"/>
</dbReference>
<dbReference type="PROSITE" id="PS50888">
    <property type="entry name" value="BHLH"/>
    <property type="match status" value="1"/>
</dbReference>
<name>HTF4_DANRE</name>
<proteinExistence type="evidence at transcript level"/>
<sequence>MNPQQRIAAIGTDKELSDLLDFSAMFSPPVNSGKNRPTTLGSSQFTASGMDERTSQASWASGGQSSPSFESSRGFADSHYADHLSDSRLVSHEGLSPTPFMSSSIMGKSERPPFSGYGREPGVSGCQSNLRSDIQLASPGPVTTPGKSPTPFYSYTGPNPRRRPLQDSASMDPLQTKKVRKPPPGLPTSVYAPSPSSEDFNRDSPSYPSPKPPGSMFASTFFDGTHNSSDQWNLSNGISQPGYGGMLGGSSSHMPQSGNYSNLHSHDRLNYPPHSVSPTDINASLPPMSSFHRSSASTSPFVTASHTPPVNTTEGVMAAANRGNATGSSQTGDALGKALASIYSPDHTSSSFPSNPSTPVGSPSPLAVQAGAATAGTVVTASGPAGRAGTTQWTRATGQAPSSPSYENSLHSLKNRVHQQLHEHLQDAMSFLKDVCESRMEDRLDRLDDAIHVLRNHAVGSTAALSNDIHSLLGQAHNGPISAIGSSFPSSGLVTNRTAQMGSVHREESGSLNNNNHSALQASAAPTSSSELNHQADAFRAIAGVLASQVASPLGLKVENQDKDDMHDSHASDDLKSDDESDKRDMKQNRGSSRPSCELSCSSINEDEDLNPEQKAERERERRMANNARERLRVRDINEAFKELGRMCQLHLKSEKPQTKLLILHQAVAVILSLEQQVRERNLNPKAACLKRREEEKVSGVSGDPQQAHPAVHPGLTDTSNPMGHL</sequence>
<gene>
    <name type="primary">tcf12</name>
    <name type="ORF">SO:0001217</name>
</gene>
<feature type="chain" id="PRO_0000456852" description="Transcription factor 12">
    <location>
        <begin position="1"/>
        <end position="726"/>
    </location>
</feature>
<feature type="domain" description="bHLH" evidence="3">
    <location>
        <begin position="621"/>
        <end position="674"/>
    </location>
</feature>
<feature type="region of interest" description="Disordered" evidence="4">
    <location>
        <begin position="27"/>
        <end position="75"/>
    </location>
</feature>
<feature type="region of interest" description="Disordered" evidence="4">
    <location>
        <begin position="89"/>
        <end position="223"/>
    </location>
</feature>
<feature type="region of interest" description="Disordered" evidence="4">
    <location>
        <begin position="243"/>
        <end position="267"/>
    </location>
</feature>
<feature type="region of interest" description="Disordered" evidence="4">
    <location>
        <begin position="289"/>
        <end position="309"/>
    </location>
</feature>
<feature type="region of interest" description="Disordered" evidence="4">
    <location>
        <begin position="345"/>
        <end position="367"/>
    </location>
</feature>
<feature type="region of interest" description="Disordered" evidence="4">
    <location>
        <begin position="380"/>
        <end position="409"/>
    </location>
</feature>
<feature type="region of interest" description="Disordered" evidence="4">
    <location>
        <begin position="501"/>
        <end position="532"/>
    </location>
</feature>
<feature type="region of interest" description="Disordered" evidence="4">
    <location>
        <begin position="558"/>
        <end position="624"/>
    </location>
</feature>
<feature type="region of interest" description="Class A specific domain" evidence="2">
    <location>
        <begin position="676"/>
        <end position="699"/>
    </location>
</feature>
<feature type="region of interest" description="Disordered" evidence="4">
    <location>
        <begin position="694"/>
        <end position="726"/>
    </location>
</feature>
<feature type="compositionally biased region" description="Polar residues" evidence="4">
    <location>
        <begin position="29"/>
        <end position="47"/>
    </location>
</feature>
<feature type="compositionally biased region" description="Low complexity" evidence="4">
    <location>
        <begin position="55"/>
        <end position="74"/>
    </location>
</feature>
<feature type="compositionally biased region" description="Polar residues" evidence="4">
    <location>
        <begin position="145"/>
        <end position="157"/>
    </location>
</feature>
<feature type="compositionally biased region" description="Polar residues" evidence="4">
    <location>
        <begin position="249"/>
        <end position="263"/>
    </location>
</feature>
<feature type="compositionally biased region" description="Polar residues" evidence="4">
    <location>
        <begin position="291"/>
        <end position="309"/>
    </location>
</feature>
<feature type="compositionally biased region" description="Low complexity" evidence="4">
    <location>
        <begin position="348"/>
        <end position="359"/>
    </location>
</feature>
<feature type="compositionally biased region" description="Polar residues" evidence="4">
    <location>
        <begin position="389"/>
        <end position="409"/>
    </location>
</feature>
<feature type="compositionally biased region" description="Polar residues" evidence="4">
    <location>
        <begin position="510"/>
        <end position="532"/>
    </location>
</feature>
<feature type="compositionally biased region" description="Basic and acidic residues" evidence="4">
    <location>
        <begin position="559"/>
        <end position="575"/>
    </location>
</feature>
<feature type="compositionally biased region" description="Low complexity" evidence="4">
    <location>
        <begin position="592"/>
        <end position="603"/>
    </location>
</feature>
<feature type="compositionally biased region" description="Basic and acidic residues" evidence="4">
    <location>
        <begin position="612"/>
        <end position="624"/>
    </location>
</feature>
<feature type="compositionally biased region" description="Polar residues" evidence="4">
    <location>
        <begin position="717"/>
        <end position="726"/>
    </location>
</feature>
<feature type="splice variant" id="VSP_061703" description="In isoform 3." evidence="6 7">
    <original>MNPQQRIAAIGTDKELSDLLDFSAMFSPPVNSGKNRPTTLGSSQFTASGMDERTSQASWASGGQSSPSFESSRGFADSHYADHLSDSRLVSHEGLSPTPFMSSSIMGKSERPPFSGYGREPGVSGCQSNLRSDIQLASPGPVTTPGKSPTPFYSYTGPNPRRRPLQDSASMDPLQTKKVRKPPPGLPT</original>
    <variation>MYCAYPVPGMGSMYYYNGK</variation>
    <location>
        <begin position="1"/>
        <end position="188"/>
    </location>
</feature>
<feature type="splice variant" id="VSP_061704" description="In isoform 2 and isoform 3." evidence="6 7">
    <location>
        <begin position="414"/>
        <end position="437"/>
    </location>
</feature>
<reference key="1">
    <citation type="journal article" date="2013" name="Nature">
        <title>The zebrafish reference genome sequence and its relationship to the human genome.</title>
        <authorList>
            <person name="Howe K."/>
            <person name="Clark M.D."/>
            <person name="Torroja C.F."/>
            <person name="Torrance J."/>
            <person name="Berthelot C."/>
            <person name="Muffato M."/>
            <person name="Collins J.E."/>
            <person name="Humphray S."/>
            <person name="McLaren K."/>
            <person name="Matthews L."/>
            <person name="McLaren S."/>
            <person name="Sealy I."/>
            <person name="Caccamo M."/>
            <person name="Churcher C."/>
            <person name="Scott C."/>
            <person name="Barrett J.C."/>
            <person name="Koch R."/>
            <person name="Rauch G.J."/>
            <person name="White S."/>
            <person name="Chow W."/>
            <person name="Kilian B."/>
            <person name="Quintais L.T."/>
            <person name="Guerra-Assuncao J.A."/>
            <person name="Zhou Y."/>
            <person name="Gu Y."/>
            <person name="Yen J."/>
            <person name="Vogel J.H."/>
            <person name="Eyre T."/>
            <person name="Redmond S."/>
            <person name="Banerjee R."/>
            <person name="Chi J."/>
            <person name="Fu B."/>
            <person name="Langley E."/>
            <person name="Maguire S.F."/>
            <person name="Laird G.K."/>
            <person name="Lloyd D."/>
            <person name="Kenyon E."/>
            <person name="Donaldson S."/>
            <person name="Sehra H."/>
            <person name="Almeida-King J."/>
            <person name="Loveland J."/>
            <person name="Trevanion S."/>
            <person name="Jones M."/>
            <person name="Quail M."/>
            <person name="Willey D."/>
            <person name="Hunt A."/>
            <person name="Burton J."/>
            <person name="Sims S."/>
            <person name="McLay K."/>
            <person name="Plumb B."/>
            <person name="Davis J."/>
            <person name="Clee C."/>
            <person name="Oliver K."/>
            <person name="Clark R."/>
            <person name="Riddle C."/>
            <person name="Elliot D."/>
            <person name="Threadgold G."/>
            <person name="Harden G."/>
            <person name="Ware D."/>
            <person name="Begum S."/>
            <person name="Mortimore B."/>
            <person name="Kerry G."/>
            <person name="Heath P."/>
            <person name="Phillimore B."/>
            <person name="Tracey A."/>
            <person name="Corby N."/>
            <person name="Dunn M."/>
            <person name="Johnson C."/>
            <person name="Wood J."/>
            <person name="Clark S."/>
            <person name="Pelan S."/>
            <person name="Griffiths G."/>
            <person name="Smith M."/>
            <person name="Glithero R."/>
            <person name="Howden P."/>
            <person name="Barker N."/>
            <person name="Lloyd C."/>
            <person name="Stevens C."/>
            <person name="Harley J."/>
            <person name="Holt K."/>
            <person name="Panagiotidis G."/>
            <person name="Lovell J."/>
            <person name="Beasley H."/>
            <person name="Henderson C."/>
            <person name="Gordon D."/>
            <person name="Auger K."/>
            <person name="Wright D."/>
            <person name="Collins J."/>
            <person name="Raisen C."/>
            <person name="Dyer L."/>
            <person name="Leung K."/>
            <person name="Robertson L."/>
            <person name="Ambridge K."/>
            <person name="Leongamornlert D."/>
            <person name="McGuire S."/>
            <person name="Gilderthorp R."/>
            <person name="Griffiths C."/>
            <person name="Manthravadi D."/>
            <person name="Nichol S."/>
            <person name="Barker G."/>
            <person name="Whitehead S."/>
            <person name="Kay M."/>
            <person name="Brown J."/>
            <person name="Murnane C."/>
            <person name="Gray E."/>
            <person name="Humphries M."/>
            <person name="Sycamore N."/>
            <person name="Barker D."/>
            <person name="Saunders D."/>
            <person name="Wallis J."/>
            <person name="Babbage A."/>
            <person name="Hammond S."/>
            <person name="Mashreghi-Mohammadi M."/>
            <person name="Barr L."/>
            <person name="Martin S."/>
            <person name="Wray P."/>
            <person name="Ellington A."/>
            <person name="Matthews N."/>
            <person name="Ellwood M."/>
            <person name="Woodmansey R."/>
            <person name="Clark G."/>
            <person name="Cooper J."/>
            <person name="Tromans A."/>
            <person name="Grafham D."/>
            <person name="Skuce C."/>
            <person name="Pandian R."/>
            <person name="Andrews R."/>
            <person name="Harrison E."/>
            <person name="Kimberley A."/>
            <person name="Garnett J."/>
            <person name="Fosker N."/>
            <person name="Hall R."/>
            <person name="Garner P."/>
            <person name="Kelly D."/>
            <person name="Bird C."/>
            <person name="Palmer S."/>
            <person name="Gehring I."/>
            <person name="Berger A."/>
            <person name="Dooley C.M."/>
            <person name="Ersan-Urun Z."/>
            <person name="Eser C."/>
            <person name="Geiger H."/>
            <person name="Geisler M."/>
            <person name="Karotki L."/>
            <person name="Kirn A."/>
            <person name="Konantz J."/>
            <person name="Konantz M."/>
            <person name="Oberlander M."/>
            <person name="Rudolph-Geiger S."/>
            <person name="Teucke M."/>
            <person name="Lanz C."/>
            <person name="Raddatz G."/>
            <person name="Osoegawa K."/>
            <person name="Zhu B."/>
            <person name="Rapp A."/>
            <person name="Widaa S."/>
            <person name="Langford C."/>
            <person name="Yang F."/>
            <person name="Schuster S.C."/>
            <person name="Carter N.P."/>
            <person name="Harrow J."/>
            <person name="Ning Z."/>
            <person name="Herrero J."/>
            <person name="Searle S.M."/>
            <person name="Enright A."/>
            <person name="Geisler R."/>
            <person name="Plasterk R.H."/>
            <person name="Lee C."/>
            <person name="Westerfield M."/>
            <person name="de Jong P.J."/>
            <person name="Zon L.I."/>
            <person name="Postlethwait J.H."/>
            <person name="Nusslein-Volhard C."/>
            <person name="Hubbard T.J."/>
            <person name="Roest Crollius H."/>
            <person name="Rogers J."/>
            <person name="Stemple D.L."/>
        </authorList>
    </citation>
    <scope>NUCLEOTIDE SEQUENCE [LARGE SCALE GENOMIC DNA]</scope>
    <source>
        <strain>Tuebingen</strain>
    </source>
</reference>
<reference key="2">
    <citation type="submission" date="2004-05" db="EMBL/GenBank/DDBJ databases">
        <authorList>
            <consortium name="NIH - Zebrafish Gene Collection (ZGC) project"/>
        </authorList>
    </citation>
    <scope>NUCLEOTIDE SEQUENCE [LARGE SCALE MRNA] (ISOFORM 3)</scope>
    <source>
        <tissue>Embryo</tissue>
    </source>
</reference>
<reference key="3">
    <citation type="journal article" date="2020" name="Hum. Mol. Genet.">
        <title>TCF12 haploinsufficiency causes autosomal dominant Kallmann syndrome and reveals network-level interactions between causal loci.</title>
        <authorList>
            <person name="Davis E.E."/>
            <person name="Balasubramanian R."/>
            <person name="Kupchinsky Z.A."/>
            <person name="Keefe D.L."/>
            <person name="Plummer L."/>
            <person name="Khan K."/>
            <person name="Meczekalski B."/>
            <person name="Heath K.E."/>
            <person name="Lopez-Gonzalez V."/>
            <person name="Ballesta-Martinez M.J."/>
            <person name="Margabanthu G."/>
            <person name="Price S."/>
            <person name="Greening J."/>
            <person name="Brauner R."/>
            <person name="Valenzuela I."/>
            <person name="Cusco I."/>
            <person name="Fernandez-Alvarez P."/>
            <person name="Wierman M.E."/>
            <person name="Li T."/>
            <person name="Lage K."/>
            <person name="Barroso P.S."/>
            <person name="Chan Y.M."/>
            <person name="Crowley W.F."/>
            <person name="Katsanis N."/>
        </authorList>
    </citation>
    <scope>ALTERNATIVE SPLICING (ISOFORMS 1; 2 AND 3)</scope>
    <scope>DISRUPTION PHENOTYPE</scope>
    <scope>FUNCTION</scope>
</reference>